<proteinExistence type="inferred from homology"/>
<dbReference type="EC" id="2.7.7.49"/>
<dbReference type="EC" id="3.1.26.4"/>
<dbReference type="EMBL" id="Y18890">
    <property type="protein sequence ID" value="CAB56603.1"/>
    <property type="status" value="ALT_INIT"/>
    <property type="molecule type" value="Genomic_DNA"/>
</dbReference>
<dbReference type="EMBL" id="AF333072">
    <property type="protein sequence ID" value="AAL60056.1"/>
    <property type="status" value="ALT_INIT"/>
    <property type="molecule type" value="Genomic_DNA"/>
</dbReference>
<dbReference type="EMBL" id="AL121985">
    <property type="status" value="NOT_ANNOTATED_CDS"/>
    <property type="molecule type" value="Genomic_DNA"/>
</dbReference>
<dbReference type="EMBL" id="AY550203">
    <property type="protein sequence ID" value="AAS46612.1"/>
    <property type="molecule type" value="Genomic_DNA"/>
</dbReference>
<dbReference type="SMR" id="Q9QC07"/>
<dbReference type="FunCoup" id="Q9QC07">
    <property type="interactions" value="9"/>
</dbReference>
<dbReference type="BioMuta" id="HGNC:39025"/>
<dbReference type="DMDM" id="52000844"/>
<dbReference type="MassIVE" id="Q9QC07"/>
<dbReference type="PeptideAtlas" id="Q9QC07"/>
<dbReference type="GeneCards" id="ERVK-18"/>
<dbReference type="HGNC" id="HGNC:39025">
    <property type="gene designation" value="ERVK-18"/>
</dbReference>
<dbReference type="neXtProt" id="NX_Q9QC07"/>
<dbReference type="InParanoid" id="Q9QC07"/>
<dbReference type="PAN-GO" id="Q9QC07">
    <property type="GO annotations" value="1 GO annotation based on evolutionary models"/>
</dbReference>
<dbReference type="PhylomeDB" id="Q9QC07"/>
<dbReference type="Pharos" id="Q9QC07">
    <property type="development level" value="Tdark"/>
</dbReference>
<dbReference type="Proteomes" id="UP000005640">
    <property type="component" value="Unplaced"/>
</dbReference>
<dbReference type="RNAct" id="Q9QC07">
    <property type="molecule type" value="protein"/>
</dbReference>
<dbReference type="GO" id="GO:0003677">
    <property type="term" value="F:DNA binding"/>
    <property type="evidence" value="ECO:0007669"/>
    <property type="project" value="UniProtKB-KW"/>
</dbReference>
<dbReference type="GO" id="GO:0035613">
    <property type="term" value="F:RNA stem-loop binding"/>
    <property type="evidence" value="ECO:0000318"/>
    <property type="project" value="GO_Central"/>
</dbReference>
<dbReference type="GO" id="GO:0003964">
    <property type="term" value="F:RNA-directed DNA polymerase activity"/>
    <property type="evidence" value="ECO:0007669"/>
    <property type="project" value="UniProtKB-KW"/>
</dbReference>
<dbReference type="GO" id="GO:0004523">
    <property type="term" value="F:RNA-DNA hybrid ribonuclease activity"/>
    <property type="evidence" value="ECO:0007669"/>
    <property type="project" value="UniProtKB-EC"/>
</dbReference>
<dbReference type="GO" id="GO:0008270">
    <property type="term" value="F:zinc ion binding"/>
    <property type="evidence" value="ECO:0007669"/>
    <property type="project" value="UniProtKB-KW"/>
</dbReference>
<dbReference type="GO" id="GO:0015074">
    <property type="term" value="P:DNA integration"/>
    <property type="evidence" value="ECO:0007669"/>
    <property type="project" value="InterPro"/>
</dbReference>
<dbReference type="GO" id="GO:0000731">
    <property type="term" value="P:DNA synthesis involved in DNA repair"/>
    <property type="evidence" value="ECO:0007669"/>
    <property type="project" value="UniProtKB-ARBA"/>
</dbReference>
<dbReference type="GO" id="GO:0006261">
    <property type="term" value="P:DNA-templated DNA replication"/>
    <property type="evidence" value="ECO:0007669"/>
    <property type="project" value="UniProtKB-ARBA"/>
</dbReference>
<dbReference type="CDD" id="cd09273">
    <property type="entry name" value="RNase_HI_RT_Bel"/>
    <property type="match status" value="1"/>
</dbReference>
<dbReference type="CDD" id="cd01645">
    <property type="entry name" value="RT_Rtv"/>
    <property type="match status" value="1"/>
</dbReference>
<dbReference type="FunFam" id="3.30.70.270:FF:000085">
    <property type="entry name" value="Endogenous retrovirus group K member 10 Pol protein"/>
    <property type="match status" value="1"/>
</dbReference>
<dbReference type="FunFam" id="3.30.420.10:FF:000145">
    <property type="entry name" value="Endogenous retrovirus group K member 18 Pol protein"/>
    <property type="match status" value="1"/>
</dbReference>
<dbReference type="FunFam" id="3.30.420.10:FF:000146">
    <property type="entry name" value="Endogenous retrovirus group K member 6 Pol protein"/>
    <property type="match status" value="1"/>
</dbReference>
<dbReference type="Gene3D" id="1.10.10.200">
    <property type="match status" value="1"/>
</dbReference>
<dbReference type="Gene3D" id="3.30.70.270">
    <property type="match status" value="2"/>
</dbReference>
<dbReference type="Gene3D" id="3.10.10.10">
    <property type="entry name" value="HIV Type 1 Reverse Transcriptase, subunit A, domain 1"/>
    <property type="match status" value="1"/>
</dbReference>
<dbReference type="Gene3D" id="3.30.420.10">
    <property type="entry name" value="Ribonuclease H-like superfamily/Ribonuclease H"/>
    <property type="match status" value="2"/>
</dbReference>
<dbReference type="InterPro" id="IPR043502">
    <property type="entry name" value="DNA/RNA_pol_sf"/>
</dbReference>
<dbReference type="InterPro" id="IPR017856">
    <property type="entry name" value="Integrase-like_N"/>
</dbReference>
<dbReference type="InterPro" id="IPR001584">
    <property type="entry name" value="Integrase_cat-core"/>
</dbReference>
<dbReference type="InterPro" id="IPR003308">
    <property type="entry name" value="Integrase_Zn-bd_dom_N"/>
</dbReference>
<dbReference type="InterPro" id="IPR043128">
    <property type="entry name" value="Rev_trsase/Diguanyl_cyclase"/>
</dbReference>
<dbReference type="InterPro" id="IPR012337">
    <property type="entry name" value="RNaseH-like_sf"/>
</dbReference>
<dbReference type="InterPro" id="IPR002156">
    <property type="entry name" value="RNaseH_domain"/>
</dbReference>
<dbReference type="InterPro" id="IPR036397">
    <property type="entry name" value="RNaseH_sf"/>
</dbReference>
<dbReference type="InterPro" id="IPR000477">
    <property type="entry name" value="RT_dom"/>
</dbReference>
<dbReference type="InterPro" id="IPR010661">
    <property type="entry name" value="RVT_thumb"/>
</dbReference>
<dbReference type="PANTHER" id="PTHR41694:SF4">
    <property type="entry name" value="ENDOGENOUS RETROVIRUS GROUP K MEMBER 10 POL PROTEIN-RELATED"/>
    <property type="match status" value="1"/>
</dbReference>
<dbReference type="PANTHER" id="PTHR41694">
    <property type="entry name" value="ENDOGENOUS RETROVIRUS GROUP K MEMBER POL PROTEIN"/>
    <property type="match status" value="1"/>
</dbReference>
<dbReference type="Pfam" id="PF02022">
    <property type="entry name" value="Integrase_Zn"/>
    <property type="match status" value="1"/>
</dbReference>
<dbReference type="Pfam" id="PF00075">
    <property type="entry name" value="RNase_H"/>
    <property type="match status" value="1"/>
</dbReference>
<dbReference type="Pfam" id="PF00665">
    <property type="entry name" value="rve"/>
    <property type="match status" value="1"/>
</dbReference>
<dbReference type="Pfam" id="PF00078">
    <property type="entry name" value="RVT_1"/>
    <property type="match status" value="1"/>
</dbReference>
<dbReference type="Pfam" id="PF06817">
    <property type="entry name" value="RVT_thumb"/>
    <property type="match status" value="1"/>
</dbReference>
<dbReference type="SUPFAM" id="SSF56672">
    <property type="entry name" value="DNA/RNA polymerases"/>
    <property type="match status" value="1"/>
</dbReference>
<dbReference type="SUPFAM" id="SSF46919">
    <property type="entry name" value="N-terminal Zn binding domain of HIV integrase"/>
    <property type="match status" value="1"/>
</dbReference>
<dbReference type="SUPFAM" id="SSF53098">
    <property type="entry name" value="Ribonuclease H-like"/>
    <property type="match status" value="2"/>
</dbReference>
<dbReference type="PROSITE" id="PS50994">
    <property type="entry name" value="INTEGRASE"/>
    <property type="match status" value="1"/>
</dbReference>
<dbReference type="PROSITE" id="PS50879">
    <property type="entry name" value="RNASE_H_1"/>
    <property type="match status" value="1"/>
</dbReference>
<dbReference type="PROSITE" id="PS50878">
    <property type="entry name" value="RT_POL"/>
    <property type="match status" value="1"/>
</dbReference>
<dbReference type="PROSITE" id="PS50876">
    <property type="entry name" value="ZF_INTEGRASE"/>
    <property type="match status" value="1"/>
</dbReference>
<comment type="function">
    <text>Early post-infection, the reverse transcriptase converts the viral RNA genome into double-stranded viral DNA. The RNase H domain of the reverse transcriptase performs two functions. It degrades the RNA template and specifically removes the RNA primer from the RNA/DNA hybrid. Following nuclear import, the integrase catalyzes the insertion of the linear, double-stranded viral DNA into the host cell chromosome. Endogenous Pol proteins may have kept, lost or modified their original function during evolution.</text>
</comment>
<comment type="catalytic activity">
    <reaction evidence="1">
        <text>DNA(n) + a 2'-deoxyribonucleoside 5'-triphosphate = DNA(n+1) + diphosphate</text>
        <dbReference type="Rhea" id="RHEA:22508"/>
        <dbReference type="Rhea" id="RHEA-COMP:17339"/>
        <dbReference type="Rhea" id="RHEA-COMP:17340"/>
        <dbReference type="ChEBI" id="CHEBI:33019"/>
        <dbReference type="ChEBI" id="CHEBI:61560"/>
        <dbReference type="ChEBI" id="CHEBI:173112"/>
        <dbReference type="EC" id="2.7.7.49"/>
    </reaction>
</comment>
<comment type="catalytic activity">
    <reaction evidence="2">
        <text>Endonucleolytic cleavage to 5'-phosphomonoester.</text>
        <dbReference type="EC" id="3.1.26.4"/>
    </reaction>
</comment>
<comment type="domain">
    <text>The LPQG and YXDD motifs are catalytically important and conserved among many retroviruses.</text>
</comment>
<comment type="miscellaneous">
    <text>This protein is synthesized as Gag-Pro and Gag-Pro-Pol polyprotein precursors. These polyproteins are thought, by similarity with type-B retroviruses, to be generated by -1 frameshifts occurring at the Gag-Pro and Pro-Pol genes boundaries.</text>
</comment>
<comment type="miscellaneous">
    <text>Exact N-terminus of this protein has not been formally described.</text>
</comment>
<comment type="miscellaneous">
    <text>Intragenic, in the first intron of CD48 gene.</text>
</comment>
<comment type="similarity">
    <text evidence="5">Belongs to the beta type-B retroviral polymerase family. HERV class-II K(HML-2) pol subfamily.</text>
</comment>
<comment type="caution">
    <text evidence="5">Truncated; premature stop codon after the RNase H domain.</text>
</comment>
<comment type="sequence caution" evidence="5">
    <conflict type="erroneous initiation">
        <sequence resource="EMBL-CDS" id="AAL60056"/>
    </conflict>
    <text>Truncated N-terminus.</text>
</comment>
<comment type="sequence caution" evidence="5">
    <conflict type="erroneous initiation">
        <sequence resource="EMBL-CDS" id="CAB56603"/>
    </conflict>
    <text>Truncated N-terminus.</text>
</comment>
<protein>
    <recommendedName>
        <fullName>Endogenous retrovirus group K member 18 Pol protein</fullName>
    </recommendedName>
    <alternativeName>
        <fullName>HERV-K(C1a) Pol protein</fullName>
    </alternativeName>
    <alternativeName>
        <fullName>HERV-K110 Pol protein</fullName>
    </alternativeName>
    <alternativeName>
        <fullName>HERV-K18 Pol protein</fullName>
    </alternativeName>
    <alternativeName>
        <fullName>HERV-K_1q23.3 provirus ancestral Pol protein</fullName>
    </alternativeName>
    <domain>
        <recommendedName>
            <fullName>Reverse transcriptase</fullName>
            <ecNumber>2.7.7.49</ecNumber>
        </recommendedName>
    </domain>
    <domain>
        <recommendedName>
            <fullName>Ribonuclease H</fullName>
            <shortName>RNase H</shortName>
            <ecNumber>3.1.26.4</ecNumber>
        </recommendedName>
    </domain>
</protein>
<reference key="1">
    <citation type="journal article" date="1999" name="J. Virol.">
        <title>Genome wide screening, cloning, chromosomal assignment and expression of full-length human endogenous retrovirus type K (HERV-K).</title>
        <authorList>
            <person name="Toenjes R.R."/>
            <person name="Czauderna F."/>
            <person name="Kurth R."/>
        </authorList>
    </citation>
    <scope>NUCLEOTIDE SEQUENCE [GENOMIC DNA]</scope>
</reference>
<reference key="2">
    <citation type="journal article" date="2001" name="Immunity">
        <title>Interferon-alpha induced endogenous superantigen: a model linking environment and autoimmunity.</title>
        <authorList>
            <person name="Stauffer Y."/>
            <person name="Marguerat S."/>
            <person name="Meylan F."/>
            <person name="Ucla C."/>
            <person name="Sutkowski N."/>
            <person name="Huber B.T."/>
            <person name="Pelet T."/>
            <person name="Conrad B."/>
        </authorList>
    </citation>
    <scope>NUCLEOTIDE SEQUENCE [GENOMIC DNA]</scope>
</reference>
<reference key="3">
    <citation type="journal article" date="2006" name="Nature">
        <title>The DNA sequence and biological annotation of human chromosome 1.</title>
        <authorList>
            <person name="Gregory S.G."/>
            <person name="Barlow K.F."/>
            <person name="McLay K.E."/>
            <person name="Kaul R."/>
            <person name="Swarbreck D."/>
            <person name="Dunham A."/>
            <person name="Scott C.E."/>
            <person name="Howe K.L."/>
            <person name="Woodfine K."/>
            <person name="Spencer C.C.A."/>
            <person name="Jones M.C."/>
            <person name="Gillson C."/>
            <person name="Searle S."/>
            <person name="Zhou Y."/>
            <person name="Kokocinski F."/>
            <person name="McDonald L."/>
            <person name="Evans R."/>
            <person name="Phillips K."/>
            <person name="Atkinson A."/>
            <person name="Cooper R."/>
            <person name="Jones C."/>
            <person name="Hall R.E."/>
            <person name="Andrews T.D."/>
            <person name="Lloyd C."/>
            <person name="Ainscough R."/>
            <person name="Almeida J.P."/>
            <person name="Ambrose K.D."/>
            <person name="Anderson F."/>
            <person name="Andrew R.W."/>
            <person name="Ashwell R.I.S."/>
            <person name="Aubin K."/>
            <person name="Babbage A.K."/>
            <person name="Bagguley C.L."/>
            <person name="Bailey J."/>
            <person name="Beasley H."/>
            <person name="Bethel G."/>
            <person name="Bird C.P."/>
            <person name="Bray-Allen S."/>
            <person name="Brown J.Y."/>
            <person name="Brown A.J."/>
            <person name="Buckley D."/>
            <person name="Burton J."/>
            <person name="Bye J."/>
            <person name="Carder C."/>
            <person name="Chapman J.C."/>
            <person name="Clark S.Y."/>
            <person name="Clarke G."/>
            <person name="Clee C."/>
            <person name="Cobley V."/>
            <person name="Collier R.E."/>
            <person name="Corby N."/>
            <person name="Coville G.J."/>
            <person name="Davies J."/>
            <person name="Deadman R."/>
            <person name="Dunn M."/>
            <person name="Earthrowl M."/>
            <person name="Ellington A.G."/>
            <person name="Errington H."/>
            <person name="Frankish A."/>
            <person name="Frankland J."/>
            <person name="French L."/>
            <person name="Garner P."/>
            <person name="Garnett J."/>
            <person name="Gay L."/>
            <person name="Ghori M.R.J."/>
            <person name="Gibson R."/>
            <person name="Gilby L.M."/>
            <person name="Gillett W."/>
            <person name="Glithero R.J."/>
            <person name="Grafham D.V."/>
            <person name="Griffiths C."/>
            <person name="Griffiths-Jones S."/>
            <person name="Grocock R."/>
            <person name="Hammond S."/>
            <person name="Harrison E.S.I."/>
            <person name="Hart E."/>
            <person name="Haugen E."/>
            <person name="Heath P.D."/>
            <person name="Holmes S."/>
            <person name="Holt K."/>
            <person name="Howden P.J."/>
            <person name="Hunt A.R."/>
            <person name="Hunt S.E."/>
            <person name="Hunter G."/>
            <person name="Isherwood J."/>
            <person name="James R."/>
            <person name="Johnson C."/>
            <person name="Johnson D."/>
            <person name="Joy A."/>
            <person name="Kay M."/>
            <person name="Kershaw J.K."/>
            <person name="Kibukawa M."/>
            <person name="Kimberley A.M."/>
            <person name="King A."/>
            <person name="Knights A.J."/>
            <person name="Lad H."/>
            <person name="Laird G."/>
            <person name="Lawlor S."/>
            <person name="Leongamornlert D.A."/>
            <person name="Lloyd D.M."/>
            <person name="Loveland J."/>
            <person name="Lovell J."/>
            <person name="Lush M.J."/>
            <person name="Lyne R."/>
            <person name="Martin S."/>
            <person name="Mashreghi-Mohammadi M."/>
            <person name="Matthews L."/>
            <person name="Matthews N.S.W."/>
            <person name="McLaren S."/>
            <person name="Milne S."/>
            <person name="Mistry S."/>
            <person name="Moore M.J.F."/>
            <person name="Nickerson T."/>
            <person name="O'Dell C.N."/>
            <person name="Oliver K."/>
            <person name="Palmeiri A."/>
            <person name="Palmer S.A."/>
            <person name="Parker A."/>
            <person name="Patel D."/>
            <person name="Pearce A.V."/>
            <person name="Peck A.I."/>
            <person name="Pelan S."/>
            <person name="Phelps K."/>
            <person name="Phillimore B.J."/>
            <person name="Plumb R."/>
            <person name="Rajan J."/>
            <person name="Raymond C."/>
            <person name="Rouse G."/>
            <person name="Saenphimmachak C."/>
            <person name="Sehra H.K."/>
            <person name="Sheridan E."/>
            <person name="Shownkeen R."/>
            <person name="Sims S."/>
            <person name="Skuce C.D."/>
            <person name="Smith M."/>
            <person name="Steward C."/>
            <person name="Subramanian S."/>
            <person name="Sycamore N."/>
            <person name="Tracey A."/>
            <person name="Tromans A."/>
            <person name="Van Helmond Z."/>
            <person name="Wall M."/>
            <person name="Wallis J.M."/>
            <person name="White S."/>
            <person name="Whitehead S.L."/>
            <person name="Wilkinson J.E."/>
            <person name="Willey D.L."/>
            <person name="Williams H."/>
            <person name="Wilming L."/>
            <person name="Wray P.W."/>
            <person name="Wu Z."/>
            <person name="Coulson A."/>
            <person name="Vaudin M."/>
            <person name="Sulston J.E."/>
            <person name="Durbin R.M."/>
            <person name="Hubbard T."/>
            <person name="Wooster R."/>
            <person name="Dunham I."/>
            <person name="Carter N.P."/>
            <person name="McVean G."/>
            <person name="Ross M.T."/>
            <person name="Harrow J."/>
            <person name="Olson M.V."/>
            <person name="Beck S."/>
            <person name="Rogers J."/>
            <person name="Bentley D.R."/>
        </authorList>
    </citation>
    <scope>NUCLEOTIDE SEQUENCE [LARGE SCALE GENOMIC DNA] OF 1-613</scope>
</reference>
<reference key="4">
    <citation type="submission" date="2004-02" db="EMBL/GenBank/DDBJ databases">
        <title>The human immunodeficiency virus type 1 (HIV-1) Tat protein activates a replication-competent human endogenous retrovirus type K in astrocytes.</title>
        <authorList>
            <person name="Contreras-Galindo R.A."/>
            <person name="Chompre G."/>
            <person name="Gonzalez M."/>
            <person name="Noel R.J. Jr."/>
        </authorList>
    </citation>
    <scope>NUCLEOTIDE SEQUENCE [GENOMIC DNA] OF 76-156</scope>
</reference>
<keyword id="KW-0238">DNA-binding</keyword>
<keyword id="KW-0255">Endonuclease</keyword>
<keyword id="KW-0895">ERV</keyword>
<keyword id="KW-0378">Hydrolase</keyword>
<keyword id="KW-0479">Metal-binding</keyword>
<keyword id="KW-0511">Multifunctional enzyme</keyword>
<keyword id="KW-0540">Nuclease</keyword>
<keyword id="KW-0548">Nucleotidyltransferase</keyword>
<keyword id="KW-1185">Reference proteome</keyword>
<keyword id="KW-0695">RNA-directed DNA polymerase</keyword>
<keyword id="KW-0808">Transferase</keyword>
<keyword id="KW-0814">Transposable element</keyword>
<keyword id="KW-0862">Zinc</keyword>
<keyword id="KW-0863">Zinc-finger</keyword>
<evidence type="ECO:0000255" key="1">
    <source>
        <dbReference type="PROSITE-ProRule" id="PRU00405"/>
    </source>
</evidence>
<evidence type="ECO:0000255" key="2">
    <source>
        <dbReference type="PROSITE-ProRule" id="PRU00408"/>
    </source>
</evidence>
<evidence type="ECO:0000255" key="3">
    <source>
        <dbReference type="PROSITE-ProRule" id="PRU00450"/>
    </source>
</evidence>
<evidence type="ECO:0000255" key="4">
    <source>
        <dbReference type="PROSITE-ProRule" id="PRU00457"/>
    </source>
</evidence>
<evidence type="ECO:0000305" key="5"/>
<gene>
    <name type="primary">ERVK-18</name>
</gene>
<name>POK18_HUMAN</name>
<sequence length="812" mass="91948">NKSRKRRNRVSFLGVTTVEPPKPIPLTWKTEKLVWVNQWPLPKQKLEALHLLANEQLEKGHIEPSFSPWNSPVFVIQKKSSKWRMLTDLRAVNAVIQPMGPLQPGLPSPAMIPKDWPLIIIDLKDCFFTIPLAEQDCEKFAFTIPAINNKEPATRFQWKVLPQGMLNSPTICQTFVGRALQPVRDKFSDCYIIHYFDDILCAAETKDKLIDCYTFLQAEVANAGLAIASDKIQTSTPFHYLGMQIENRKIKPQKIEIRKDTLKTLNDFQKLLGDINWIRPTLGIPTYAMSNLFSILRGDSDLNSKRMLTPEATKEIKLVEEKIQSAQINRIDPLAPLQLLIFATAHSPTGIIIQNTDLVEWSFLPHSTVKTFTLYLDQIATLIGPTRLRIIKLCGNDPDKIVVPLTKEQVRQAFINSGAWQIGLANFVGIIDNHYPKTKIFQFLKLTTWILPKITRREPLENALTVFTDGSSNGKVAYTGPKERVIKTPYQSAQRAELVAVITVLQDFDQPINIISDSAYVVQATRDVETALIKYSMDDQLNQLFNLLQQTVRKRNFPFYITHIRAHTNLPGPLTKANEQADLLVSSAFIKAQELHALTHVNAAGLKNKFDVTWKQAKDIVQHCTQCQVLDLPTQEAGVNPEVCVLMHYGKWMSHMYLHLGRLSYVHVTVDTYSHFMCATCQTGESTSHVKKHLLSCFAVMGVPEKIKTDNGPGYCSKAFQKFLSQWKISHTTGIPYNSQGQAIVERTNRTLKTQLVKQKEGGDSKECTTPQMQLNLALYTLNFLNIYRNQTTTSAEHLTGKKNSPHEGKLI</sequence>
<organism>
    <name type="scientific">Homo sapiens</name>
    <name type="common">Human</name>
    <dbReference type="NCBI Taxonomy" id="9606"/>
    <lineage>
        <taxon>Eukaryota</taxon>
        <taxon>Metazoa</taxon>
        <taxon>Chordata</taxon>
        <taxon>Craniata</taxon>
        <taxon>Vertebrata</taxon>
        <taxon>Euteleostomi</taxon>
        <taxon>Mammalia</taxon>
        <taxon>Eutheria</taxon>
        <taxon>Euarchontoglires</taxon>
        <taxon>Primates</taxon>
        <taxon>Haplorrhini</taxon>
        <taxon>Catarrhini</taxon>
        <taxon>Hominidae</taxon>
        <taxon>Homo</taxon>
    </lineage>
</organism>
<accession>Q9QC07</accession>
<accession>Q6QAI9</accession>
<accession>Q96PI5</accession>
<feature type="chain" id="PRO_0000186767" description="Endogenous retrovirus group K member 18 Pol protein">
    <location>
        <begin position="1"/>
        <end position="812"/>
    </location>
</feature>
<feature type="domain" description="Reverse transcriptase" evidence="1">
    <location>
        <begin position="57"/>
        <end position="245"/>
    </location>
</feature>
<feature type="domain" description="RNase H type-1" evidence="2">
    <location>
        <begin position="460"/>
        <end position="590"/>
    </location>
</feature>
<feature type="domain" description="Integrase catalytic" evidence="4">
    <location>
        <begin position="637"/>
        <end position="803"/>
    </location>
</feature>
<feature type="zinc finger region" description="Integrase-type" evidence="3">
    <location>
        <begin position="587"/>
        <end position="628"/>
    </location>
</feature>
<feature type="short sequence motif" description="LPQG">
    <location>
        <begin position="161"/>
        <end position="164"/>
    </location>
</feature>
<feature type="short sequence motif" description="YXDD">
    <location>
        <begin position="195"/>
        <end position="198"/>
    </location>
</feature>
<feature type="binding site" evidence="2">
    <location>
        <position position="469"/>
    </location>
    <ligand>
        <name>Mg(2+)</name>
        <dbReference type="ChEBI" id="CHEBI:18420"/>
        <label>1</label>
    </ligand>
</feature>
<feature type="binding site" evidence="2">
    <location>
        <position position="469"/>
    </location>
    <ligand>
        <name>Mg(2+)</name>
        <dbReference type="ChEBI" id="CHEBI:18420"/>
        <label>2</label>
    </ligand>
</feature>
<feature type="binding site" evidence="2">
    <location>
        <position position="497"/>
    </location>
    <ligand>
        <name>Mg(2+)</name>
        <dbReference type="ChEBI" id="CHEBI:18420"/>
        <label>1</label>
    </ligand>
</feature>
<feature type="binding site" evidence="2">
    <location>
        <position position="517"/>
    </location>
    <ligand>
        <name>Mg(2+)</name>
        <dbReference type="ChEBI" id="CHEBI:18420"/>
        <label>1</label>
    </ligand>
</feature>
<feature type="binding site" evidence="2">
    <location>
        <position position="582"/>
    </location>
    <ligand>
        <name>Mg(2+)</name>
        <dbReference type="ChEBI" id="CHEBI:18420"/>
        <label>2</label>
    </ligand>
</feature>
<feature type="binding site" evidence="3">
    <location>
        <position position="596"/>
    </location>
    <ligand>
        <name>Zn(2+)</name>
        <dbReference type="ChEBI" id="CHEBI:29105"/>
    </ligand>
</feature>
<feature type="binding site" evidence="3">
    <location>
        <position position="600"/>
    </location>
    <ligand>
        <name>Zn(2+)</name>
        <dbReference type="ChEBI" id="CHEBI:29105"/>
    </ligand>
</feature>
<feature type="binding site" evidence="3">
    <location>
        <position position="624"/>
    </location>
    <ligand>
        <name>Zn(2+)</name>
        <dbReference type="ChEBI" id="CHEBI:29105"/>
    </ligand>
</feature>
<feature type="binding site" evidence="3">
    <location>
        <position position="627"/>
    </location>
    <ligand>
        <name>Zn(2+)</name>
        <dbReference type="ChEBI" id="CHEBI:29105"/>
    </ligand>
</feature>
<feature type="sequence conflict" description="In Ref. 1; CAB56603." evidence="5" ref="1">
    <original>I</original>
    <variation>L</variation>
    <location>
        <position position="171"/>
    </location>
</feature>
<feature type="sequence conflict" description="In Ref. 3; AL121985." evidence="5" ref="3">
    <original>R</original>
    <variation>C</variation>
    <location>
        <position position="457"/>
    </location>
</feature>
<feature type="sequence conflict" description="In Ref. 2; AAL60056." evidence="5" ref="2">
    <original>D</original>
    <variation>N</variation>
    <location>
        <position position="631"/>
    </location>
</feature>
<feature type="sequence conflict" description="In Ref. 2; AAL60056." evidence="5" ref="2">
    <original>VCVLMHYGKWMSHMYLHLGR</original>
    <variation>GLCPNALWQMDVTHVPSFGK</variation>
    <location>
        <begin position="643"/>
        <end position="662"/>
    </location>
</feature>
<feature type="sequence conflict" description="In Ref. 2; AAL60056." evidence="5" ref="2">
    <original>C</original>
    <variation>W</variation>
    <location>
        <position position="678"/>
    </location>
</feature>
<feature type="sequence conflict" description="In Ref. 2; AAL60056." evidence="5" ref="2">
    <original>E</original>
    <variation>K</variation>
    <location>
        <position position="705"/>
    </location>
</feature>